<dbReference type="EMBL" id="Z25751">
    <property type="protein sequence ID" value="CAA81024.1"/>
    <property type="molecule type" value="Genomic_DNA"/>
</dbReference>
<dbReference type="Proteomes" id="UP000008265">
    <property type="component" value="Genome"/>
</dbReference>
<dbReference type="GO" id="GO:0044220">
    <property type="term" value="C:host cell perinuclear region of cytoplasm"/>
    <property type="evidence" value="ECO:0007669"/>
    <property type="project" value="UniProtKB-SubCell"/>
</dbReference>
<dbReference type="GO" id="GO:0060967">
    <property type="term" value="P:negative regulation of gene silencing by regulatory ncRNA"/>
    <property type="evidence" value="ECO:0007669"/>
    <property type="project" value="InterPro"/>
</dbReference>
<dbReference type="GO" id="GO:0052170">
    <property type="term" value="P:symbiont-mediated suppression of host innate immune response"/>
    <property type="evidence" value="ECO:0007669"/>
    <property type="project" value="UniProtKB-KW"/>
</dbReference>
<dbReference type="InterPro" id="IPR002511">
    <property type="entry name" value="Gemini_V2"/>
</dbReference>
<dbReference type="InterPro" id="IPR005159">
    <property type="entry name" value="WCCH"/>
</dbReference>
<dbReference type="Pfam" id="PF01524">
    <property type="entry name" value="Gemini_V2"/>
    <property type="match status" value="1"/>
</dbReference>
<dbReference type="Pfam" id="PF03716">
    <property type="entry name" value="WCCH"/>
    <property type="match status" value="1"/>
</dbReference>
<keyword id="KW-1035">Host cytoplasm</keyword>
<keyword id="KW-0945">Host-virus interaction</keyword>
<keyword id="KW-1090">Inhibition of host innate immune response by virus</keyword>
<keyword id="KW-0941">Suppressor of RNA silencing</keyword>
<keyword id="KW-0899">Viral immunoevasion</keyword>
<evidence type="ECO:0000250" key="1"/>
<evidence type="ECO:0000305" key="2"/>
<comment type="function">
    <text evidence="1">Through its interaction with host SGS3, acts as a suppressor of RNA-mediated gene silencing, also known as post-transcriptional gene silencing (PTGS), a mechanism of plant viral defense that limits the accumulation of viral RNAs.</text>
</comment>
<comment type="subunit">
    <text evidence="1">Interacts with host SGS3.</text>
</comment>
<comment type="subcellular location">
    <subcellularLocation>
        <location evidence="1">Host cytoplasm</location>
        <location evidence="1">Host perinuclear region</location>
    </subcellularLocation>
    <text evidence="1">Accumulates in inclusion bodies in the cell periphery. May interact with the ER network from the perinuclear region out to the cell periphery (By similarity).</text>
</comment>
<comment type="similarity">
    <text evidence="2">Belongs to the geminiviridae protein AV2/V2 family.</text>
</comment>
<accession>P61512</accession>
<accession>P27270</accession>
<proteinExistence type="inferred from homology"/>
<gene>
    <name type="ORF">V2</name>
</gene>
<organismHost>
    <name type="scientific">Cynanchum acutum</name>
    <dbReference type="NCBI Taxonomy" id="185024"/>
</organismHost>
<organismHost>
    <name type="scientific">Solanum lycopersicum</name>
    <name type="common">Tomato</name>
    <name type="synonym">Lycopersicon esculentum</name>
    <dbReference type="NCBI Taxonomy" id="4081"/>
</organismHost>
<organismHost>
    <name type="scientific">Solanum nigrum</name>
    <name type="common">Black nightshade</name>
    <dbReference type="NCBI Taxonomy" id="4112"/>
</organismHost>
<organism>
    <name type="scientific">Tomato yellow leaf curl Sardinia virus (isolate Spain-1)</name>
    <name type="common">TYLCSV</name>
    <dbReference type="NCBI Taxonomy" id="37139"/>
    <lineage>
        <taxon>Viruses</taxon>
        <taxon>Monodnaviria</taxon>
        <taxon>Shotokuvirae</taxon>
        <taxon>Cressdnaviricota</taxon>
        <taxon>Repensiviricetes</taxon>
        <taxon>Geplafuvirales</taxon>
        <taxon>Geminiviridae</taxon>
        <taxon>Begomovirus</taxon>
        <taxon>Tomato yellow leaf curl virus</taxon>
    </lineage>
</organism>
<protein>
    <recommendedName>
        <fullName>Protein V2</fullName>
    </recommendedName>
</protein>
<feature type="chain" id="PRO_0000222280" description="Protein V2">
    <location>
        <begin position="1"/>
        <end position="115"/>
    </location>
</feature>
<name>AV2_TYCS1</name>
<reference key="1">
    <citation type="journal article" date="1994" name="Arch. Virol.">
        <title>High similarity among the tomato yellow leaf curl virus isolates from the west Mediterranean basin: the nucleotide sequence of an infectious clone from Spain.</title>
        <authorList>
            <person name="Noris E."/>
            <person name="Hidalgo E."/>
            <person name="Accotto G.P."/>
            <person name="Moriones E."/>
        </authorList>
    </citation>
    <scope>NUCLEOTIDE SEQUENCE [GENOMIC DNA]</scope>
</reference>
<sequence length="115" mass="13251">MWDPLLNEFPDSVHGLRCMLAIKYLQLVEETYEPNTLGHDLIRDLISVIRARDYAEANRRYTNFNARLEGSSKTELRQPVYQPCCCPHCPRHQASIMDLQAHVSKAADVQNVQKP</sequence>